<keyword id="KW-0001">2Fe-2S</keyword>
<keyword id="KW-0004">4Fe-4S</keyword>
<keyword id="KW-0093">Biotin biosynthesis</keyword>
<keyword id="KW-0408">Iron</keyword>
<keyword id="KW-0411">Iron-sulfur</keyword>
<keyword id="KW-0479">Metal-binding</keyword>
<keyword id="KW-1185">Reference proteome</keyword>
<keyword id="KW-0949">S-adenosyl-L-methionine</keyword>
<keyword id="KW-0808">Transferase</keyword>
<organism>
    <name type="scientific">Cronobacter sakazakii (strain ATCC BAA-894)</name>
    <name type="common">Enterobacter sakazakii</name>
    <dbReference type="NCBI Taxonomy" id="290339"/>
    <lineage>
        <taxon>Bacteria</taxon>
        <taxon>Pseudomonadati</taxon>
        <taxon>Pseudomonadota</taxon>
        <taxon>Gammaproteobacteria</taxon>
        <taxon>Enterobacterales</taxon>
        <taxon>Enterobacteriaceae</taxon>
        <taxon>Cronobacter</taxon>
    </lineage>
</organism>
<name>BIOB_CROS8</name>
<sequence length="346" mass="38590">MAHLSRWTLSQVTELFEKPLLDLLFEAQQVHRQHFDPRQVQVSTLLSIKTGACPEDCKYCPQSARYKTGLEAERLMEVEQVLDSARKAKAAGSTRFCMGAAWKNPNDRDMPYLEQMVQGVKALGLETCMTLGTLSDDQAQRLGEAGLDYYNHNLDTSPEFYGNIITTRTYQERLDTLEKVREAGIKVCSGGIVGLGETVTDRAGLLLQLANLPTPPESVPINMLVKVKGTPLADNEDVDAFDFIRTIAVARIMMPTSYVRLSAGREQMNEQTQAMCFMAGANSIFYGCKLLTTPNPEEDKDLQLFRKLGLNPQQTAVLAGDNEQQERLEHALRDADNQQYYNAAAV</sequence>
<gene>
    <name evidence="1" type="primary">bioB</name>
    <name type="ordered locus">ESA_02572</name>
</gene>
<proteinExistence type="inferred from homology"/>
<comment type="function">
    <text evidence="1">Catalyzes the conversion of dethiobiotin (DTB) to biotin by the insertion of a sulfur atom into dethiobiotin via a radical-based mechanism.</text>
</comment>
<comment type="catalytic activity">
    <reaction evidence="1">
        <text>(4R,5S)-dethiobiotin + (sulfur carrier)-SH + 2 reduced [2Fe-2S]-[ferredoxin] + 2 S-adenosyl-L-methionine = (sulfur carrier)-H + biotin + 2 5'-deoxyadenosine + 2 L-methionine + 2 oxidized [2Fe-2S]-[ferredoxin]</text>
        <dbReference type="Rhea" id="RHEA:22060"/>
        <dbReference type="Rhea" id="RHEA-COMP:10000"/>
        <dbReference type="Rhea" id="RHEA-COMP:10001"/>
        <dbReference type="Rhea" id="RHEA-COMP:14737"/>
        <dbReference type="Rhea" id="RHEA-COMP:14739"/>
        <dbReference type="ChEBI" id="CHEBI:17319"/>
        <dbReference type="ChEBI" id="CHEBI:29917"/>
        <dbReference type="ChEBI" id="CHEBI:33737"/>
        <dbReference type="ChEBI" id="CHEBI:33738"/>
        <dbReference type="ChEBI" id="CHEBI:57586"/>
        <dbReference type="ChEBI" id="CHEBI:57844"/>
        <dbReference type="ChEBI" id="CHEBI:59789"/>
        <dbReference type="ChEBI" id="CHEBI:64428"/>
        <dbReference type="ChEBI" id="CHEBI:149473"/>
        <dbReference type="EC" id="2.8.1.6"/>
    </reaction>
</comment>
<comment type="cofactor">
    <cofactor evidence="1">
        <name>[4Fe-4S] cluster</name>
        <dbReference type="ChEBI" id="CHEBI:49883"/>
    </cofactor>
    <text evidence="1">Binds 1 [4Fe-4S] cluster. The cluster is coordinated with 3 cysteines and an exchangeable S-adenosyl-L-methionine.</text>
</comment>
<comment type="cofactor">
    <cofactor evidence="1">
        <name>[2Fe-2S] cluster</name>
        <dbReference type="ChEBI" id="CHEBI:190135"/>
    </cofactor>
    <text evidence="1">Binds 1 [2Fe-2S] cluster. The cluster is coordinated with 3 cysteines and 1 arginine.</text>
</comment>
<comment type="pathway">
    <text evidence="1">Cofactor biosynthesis; biotin biosynthesis; biotin from 7,8-diaminononanoate: step 2/2.</text>
</comment>
<comment type="subunit">
    <text evidence="1">Homodimer.</text>
</comment>
<comment type="similarity">
    <text evidence="1">Belongs to the radical SAM superfamily. Biotin synthase family.</text>
</comment>
<accession>A7MJ03</accession>
<evidence type="ECO:0000255" key="1">
    <source>
        <dbReference type="HAMAP-Rule" id="MF_01694"/>
    </source>
</evidence>
<evidence type="ECO:0000255" key="2">
    <source>
        <dbReference type="PROSITE-ProRule" id="PRU01266"/>
    </source>
</evidence>
<dbReference type="EC" id="2.8.1.6" evidence="1"/>
<dbReference type="EMBL" id="CP000783">
    <property type="protein sequence ID" value="ABU77817.1"/>
    <property type="molecule type" value="Genomic_DNA"/>
</dbReference>
<dbReference type="RefSeq" id="WP_004385710.1">
    <property type="nucleotide sequence ID" value="NC_009778.1"/>
</dbReference>
<dbReference type="SMR" id="A7MJ03"/>
<dbReference type="GeneID" id="56731372"/>
<dbReference type="KEGG" id="esa:ESA_02572"/>
<dbReference type="HOGENOM" id="CLU_033172_1_2_6"/>
<dbReference type="UniPathway" id="UPA00078">
    <property type="reaction ID" value="UER00162"/>
</dbReference>
<dbReference type="Proteomes" id="UP000000260">
    <property type="component" value="Chromosome"/>
</dbReference>
<dbReference type="GO" id="GO:0051537">
    <property type="term" value="F:2 iron, 2 sulfur cluster binding"/>
    <property type="evidence" value="ECO:0007669"/>
    <property type="project" value="UniProtKB-KW"/>
</dbReference>
<dbReference type="GO" id="GO:0051539">
    <property type="term" value="F:4 iron, 4 sulfur cluster binding"/>
    <property type="evidence" value="ECO:0007669"/>
    <property type="project" value="UniProtKB-KW"/>
</dbReference>
<dbReference type="GO" id="GO:0004076">
    <property type="term" value="F:biotin synthase activity"/>
    <property type="evidence" value="ECO:0007669"/>
    <property type="project" value="UniProtKB-UniRule"/>
</dbReference>
<dbReference type="GO" id="GO:0005506">
    <property type="term" value="F:iron ion binding"/>
    <property type="evidence" value="ECO:0007669"/>
    <property type="project" value="UniProtKB-UniRule"/>
</dbReference>
<dbReference type="GO" id="GO:0009102">
    <property type="term" value="P:biotin biosynthetic process"/>
    <property type="evidence" value="ECO:0007669"/>
    <property type="project" value="UniProtKB-UniRule"/>
</dbReference>
<dbReference type="CDD" id="cd01335">
    <property type="entry name" value="Radical_SAM"/>
    <property type="match status" value="1"/>
</dbReference>
<dbReference type="FunFam" id="3.20.20.70:FF:000011">
    <property type="entry name" value="Biotin synthase"/>
    <property type="match status" value="1"/>
</dbReference>
<dbReference type="Gene3D" id="3.20.20.70">
    <property type="entry name" value="Aldolase class I"/>
    <property type="match status" value="1"/>
</dbReference>
<dbReference type="HAMAP" id="MF_01694">
    <property type="entry name" value="BioB"/>
    <property type="match status" value="1"/>
</dbReference>
<dbReference type="InterPro" id="IPR013785">
    <property type="entry name" value="Aldolase_TIM"/>
</dbReference>
<dbReference type="InterPro" id="IPR010722">
    <property type="entry name" value="BATS_dom"/>
</dbReference>
<dbReference type="InterPro" id="IPR002684">
    <property type="entry name" value="Biotin_synth/BioAB"/>
</dbReference>
<dbReference type="InterPro" id="IPR024177">
    <property type="entry name" value="Biotin_synthase"/>
</dbReference>
<dbReference type="InterPro" id="IPR006638">
    <property type="entry name" value="Elp3/MiaA/NifB-like_rSAM"/>
</dbReference>
<dbReference type="InterPro" id="IPR007197">
    <property type="entry name" value="rSAM"/>
</dbReference>
<dbReference type="NCBIfam" id="TIGR00433">
    <property type="entry name" value="bioB"/>
    <property type="match status" value="1"/>
</dbReference>
<dbReference type="PANTHER" id="PTHR22976">
    <property type="entry name" value="BIOTIN SYNTHASE"/>
    <property type="match status" value="1"/>
</dbReference>
<dbReference type="PANTHER" id="PTHR22976:SF2">
    <property type="entry name" value="BIOTIN SYNTHASE, MITOCHONDRIAL"/>
    <property type="match status" value="1"/>
</dbReference>
<dbReference type="Pfam" id="PF06968">
    <property type="entry name" value="BATS"/>
    <property type="match status" value="1"/>
</dbReference>
<dbReference type="Pfam" id="PF04055">
    <property type="entry name" value="Radical_SAM"/>
    <property type="match status" value="1"/>
</dbReference>
<dbReference type="PIRSF" id="PIRSF001619">
    <property type="entry name" value="Biotin_synth"/>
    <property type="match status" value="1"/>
</dbReference>
<dbReference type="SFLD" id="SFLDF00272">
    <property type="entry name" value="biotin_synthase"/>
    <property type="match status" value="1"/>
</dbReference>
<dbReference type="SFLD" id="SFLDS00029">
    <property type="entry name" value="Radical_SAM"/>
    <property type="match status" value="1"/>
</dbReference>
<dbReference type="SMART" id="SM00876">
    <property type="entry name" value="BATS"/>
    <property type="match status" value="1"/>
</dbReference>
<dbReference type="SMART" id="SM00729">
    <property type="entry name" value="Elp3"/>
    <property type="match status" value="1"/>
</dbReference>
<dbReference type="SUPFAM" id="SSF102114">
    <property type="entry name" value="Radical SAM enzymes"/>
    <property type="match status" value="1"/>
</dbReference>
<dbReference type="PROSITE" id="PS51918">
    <property type="entry name" value="RADICAL_SAM"/>
    <property type="match status" value="1"/>
</dbReference>
<feature type="chain" id="PRO_0000381379" description="Biotin synthase">
    <location>
        <begin position="1"/>
        <end position="346"/>
    </location>
</feature>
<feature type="domain" description="Radical SAM core" evidence="2">
    <location>
        <begin position="38"/>
        <end position="256"/>
    </location>
</feature>
<feature type="binding site" evidence="1">
    <location>
        <position position="53"/>
    </location>
    <ligand>
        <name>[4Fe-4S] cluster</name>
        <dbReference type="ChEBI" id="CHEBI:49883"/>
        <note>4Fe-4S-S-AdoMet</note>
    </ligand>
</feature>
<feature type="binding site" evidence="1">
    <location>
        <position position="57"/>
    </location>
    <ligand>
        <name>[4Fe-4S] cluster</name>
        <dbReference type="ChEBI" id="CHEBI:49883"/>
        <note>4Fe-4S-S-AdoMet</note>
    </ligand>
</feature>
<feature type="binding site" evidence="1">
    <location>
        <position position="60"/>
    </location>
    <ligand>
        <name>[4Fe-4S] cluster</name>
        <dbReference type="ChEBI" id="CHEBI:49883"/>
        <note>4Fe-4S-S-AdoMet</note>
    </ligand>
</feature>
<feature type="binding site" evidence="1">
    <location>
        <position position="97"/>
    </location>
    <ligand>
        <name>[2Fe-2S] cluster</name>
        <dbReference type="ChEBI" id="CHEBI:190135"/>
    </ligand>
</feature>
<feature type="binding site" evidence="1">
    <location>
        <position position="128"/>
    </location>
    <ligand>
        <name>[2Fe-2S] cluster</name>
        <dbReference type="ChEBI" id="CHEBI:190135"/>
    </ligand>
</feature>
<feature type="binding site" evidence="1">
    <location>
        <position position="188"/>
    </location>
    <ligand>
        <name>[2Fe-2S] cluster</name>
        <dbReference type="ChEBI" id="CHEBI:190135"/>
    </ligand>
</feature>
<feature type="binding site" evidence="1">
    <location>
        <position position="260"/>
    </location>
    <ligand>
        <name>[2Fe-2S] cluster</name>
        <dbReference type="ChEBI" id="CHEBI:190135"/>
    </ligand>
</feature>
<reference key="1">
    <citation type="journal article" date="2010" name="PLoS ONE">
        <title>Genome sequence of Cronobacter sakazakii BAA-894 and comparative genomic hybridization analysis with other Cronobacter species.</title>
        <authorList>
            <person name="Kucerova E."/>
            <person name="Clifton S.W."/>
            <person name="Xia X.Q."/>
            <person name="Long F."/>
            <person name="Porwollik S."/>
            <person name="Fulton L."/>
            <person name="Fronick C."/>
            <person name="Minx P."/>
            <person name="Kyung K."/>
            <person name="Warren W."/>
            <person name="Fulton R."/>
            <person name="Feng D."/>
            <person name="Wollam A."/>
            <person name="Shah N."/>
            <person name="Bhonagiri V."/>
            <person name="Nash W.E."/>
            <person name="Hallsworth-Pepin K."/>
            <person name="Wilson R.K."/>
            <person name="McClelland M."/>
            <person name="Forsythe S.J."/>
        </authorList>
    </citation>
    <scope>NUCLEOTIDE SEQUENCE [LARGE SCALE GENOMIC DNA]</scope>
    <source>
        <strain>ATCC BAA-894</strain>
    </source>
</reference>
<protein>
    <recommendedName>
        <fullName evidence="1">Biotin synthase</fullName>
        <ecNumber evidence="1">2.8.1.6</ecNumber>
    </recommendedName>
</protein>